<name>PETN_CYAP4</name>
<gene>
    <name evidence="1" type="primary">petN</name>
    <name type="ordered locus">Cyan7425_3669</name>
</gene>
<feature type="chain" id="PRO_1000192356" description="Cytochrome b6-f complex subunit 8">
    <location>
        <begin position="1"/>
        <end position="29"/>
    </location>
</feature>
<feature type="transmembrane region" description="Helical" evidence="1">
    <location>
        <begin position="3"/>
        <end position="23"/>
    </location>
</feature>
<evidence type="ECO:0000255" key="1">
    <source>
        <dbReference type="HAMAP-Rule" id="MF_00395"/>
    </source>
</evidence>
<protein>
    <recommendedName>
        <fullName evidence="1">Cytochrome b6-f complex subunit 8</fullName>
    </recommendedName>
    <alternativeName>
        <fullName evidence="1">Cytochrome b6-f complex subunit PetN</fullName>
    </alternativeName>
    <alternativeName>
        <fullName evidence="1">Cytochrome b6-f complex subunit VIII</fullName>
    </alternativeName>
</protein>
<comment type="function">
    <text evidence="1">Component of the cytochrome b6-f complex, which mediates electron transfer between photosystem II (PSII) and photosystem I (PSI), cyclic electron flow around PSI, and state transitions.</text>
</comment>
<comment type="subunit">
    <text evidence="1">The 4 large subunits of the cytochrome b6-f complex are cytochrome b6, subunit IV (17 kDa polypeptide, PetD), cytochrome f and the Rieske protein, while the 4 small subunits are PetG, PetL, PetM and PetN. The complex functions as a dimer.</text>
</comment>
<comment type="subcellular location">
    <subcellularLocation>
        <location evidence="1">Cellular thylakoid membrane</location>
        <topology evidence="1">Single-pass membrane protein</topology>
    </subcellularLocation>
</comment>
<comment type="similarity">
    <text evidence="1">Belongs to the PetN family.</text>
</comment>
<reference key="1">
    <citation type="journal article" date="2011" name="MBio">
        <title>Novel metabolic attributes of the genus Cyanothece, comprising a group of unicellular nitrogen-fixing Cyanobacteria.</title>
        <authorList>
            <person name="Bandyopadhyay A."/>
            <person name="Elvitigala T."/>
            <person name="Welsh E."/>
            <person name="Stockel J."/>
            <person name="Liberton M."/>
            <person name="Min H."/>
            <person name="Sherman L.A."/>
            <person name="Pakrasi H.B."/>
        </authorList>
    </citation>
    <scope>NUCLEOTIDE SEQUENCE [LARGE SCALE GENOMIC DNA]</scope>
    <source>
        <strain>PCC 7425 / ATCC 29141</strain>
    </source>
</reference>
<proteinExistence type="inferred from homology"/>
<sequence length="29" mass="3238">MDILTLGWVGLLGLFTYSIAMVVWGRHGM</sequence>
<keyword id="KW-0249">Electron transport</keyword>
<keyword id="KW-0472">Membrane</keyword>
<keyword id="KW-0602">Photosynthesis</keyword>
<keyword id="KW-0793">Thylakoid</keyword>
<keyword id="KW-0812">Transmembrane</keyword>
<keyword id="KW-1133">Transmembrane helix</keyword>
<keyword id="KW-0813">Transport</keyword>
<accession>B8HSK6</accession>
<organism>
    <name type="scientific">Cyanothece sp. (strain PCC 7425 / ATCC 29141)</name>
    <dbReference type="NCBI Taxonomy" id="395961"/>
    <lineage>
        <taxon>Bacteria</taxon>
        <taxon>Bacillati</taxon>
        <taxon>Cyanobacteriota</taxon>
        <taxon>Cyanophyceae</taxon>
        <taxon>Gomontiellales</taxon>
        <taxon>Cyanothecaceae</taxon>
        <taxon>Cyanothece</taxon>
    </lineage>
</organism>
<dbReference type="EMBL" id="CP001344">
    <property type="protein sequence ID" value="ACL45989.1"/>
    <property type="molecule type" value="Genomic_DNA"/>
</dbReference>
<dbReference type="SMR" id="B8HSK6"/>
<dbReference type="STRING" id="395961.Cyan7425_3669"/>
<dbReference type="KEGG" id="cyn:Cyan7425_3669"/>
<dbReference type="HOGENOM" id="CLU_215774_1_0_3"/>
<dbReference type="GO" id="GO:0009512">
    <property type="term" value="C:cytochrome b6f complex"/>
    <property type="evidence" value="ECO:0007669"/>
    <property type="project" value="InterPro"/>
</dbReference>
<dbReference type="GO" id="GO:0031676">
    <property type="term" value="C:plasma membrane-derived thylakoid membrane"/>
    <property type="evidence" value="ECO:0007669"/>
    <property type="project" value="UniProtKB-SubCell"/>
</dbReference>
<dbReference type="GO" id="GO:0045158">
    <property type="term" value="F:electron transporter, transferring electrons within cytochrome b6/f complex of photosystem II activity"/>
    <property type="evidence" value="ECO:0007669"/>
    <property type="project" value="InterPro"/>
</dbReference>
<dbReference type="GO" id="GO:0017004">
    <property type="term" value="P:cytochrome complex assembly"/>
    <property type="evidence" value="ECO:0007669"/>
    <property type="project" value="UniProtKB-UniRule"/>
</dbReference>
<dbReference type="GO" id="GO:0015979">
    <property type="term" value="P:photosynthesis"/>
    <property type="evidence" value="ECO:0007669"/>
    <property type="project" value="UniProtKB-KW"/>
</dbReference>
<dbReference type="HAMAP" id="MF_00395">
    <property type="entry name" value="Cytb6_f_PetN"/>
    <property type="match status" value="1"/>
</dbReference>
<dbReference type="InterPro" id="IPR036143">
    <property type="entry name" value="Cytochr_b6-f_cplx_su8_sf"/>
</dbReference>
<dbReference type="InterPro" id="IPR005497">
    <property type="entry name" value="Cytochrome_b6-f_cplx_su8"/>
</dbReference>
<dbReference type="NCBIfam" id="NF011331">
    <property type="entry name" value="PRK14747.1"/>
    <property type="match status" value="1"/>
</dbReference>
<dbReference type="Pfam" id="PF03742">
    <property type="entry name" value="PetN"/>
    <property type="match status" value="1"/>
</dbReference>
<dbReference type="SUPFAM" id="SSF103451">
    <property type="entry name" value="PetN subunit of the cytochrome b6f complex"/>
    <property type="match status" value="1"/>
</dbReference>